<dbReference type="EC" id="2.3.2.27"/>
<dbReference type="EMBL" id="AF170722">
    <property type="protein sequence ID" value="AAF18029.1"/>
    <property type="molecule type" value="Genomic_DNA"/>
</dbReference>
<dbReference type="RefSeq" id="NP_052036.1">
    <property type="nucleotide sequence ID" value="NC_001266.1"/>
</dbReference>
<dbReference type="KEGG" id="vg:1486990"/>
<dbReference type="Proteomes" id="UP000000868">
    <property type="component" value="Segment"/>
</dbReference>
<dbReference type="GO" id="GO:0044174">
    <property type="term" value="C:host cell endosome"/>
    <property type="evidence" value="ECO:0007669"/>
    <property type="project" value="UniProtKB-KW"/>
</dbReference>
<dbReference type="GO" id="GO:0044177">
    <property type="term" value="C:host cell Golgi apparatus"/>
    <property type="evidence" value="ECO:0007669"/>
    <property type="project" value="UniProtKB-SubCell"/>
</dbReference>
<dbReference type="GO" id="GO:0033644">
    <property type="term" value="C:host cell membrane"/>
    <property type="evidence" value="ECO:0007669"/>
    <property type="project" value="UniProtKB-SubCell"/>
</dbReference>
<dbReference type="GO" id="GO:0016020">
    <property type="term" value="C:membrane"/>
    <property type="evidence" value="ECO:0007669"/>
    <property type="project" value="UniProtKB-KW"/>
</dbReference>
<dbReference type="GO" id="GO:0016740">
    <property type="term" value="F:transferase activity"/>
    <property type="evidence" value="ECO:0007669"/>
    <property type="project" value="UniProtKB-KW"/>
</dbReference>
<dbReference type="GO" id="GO:0008270">
    <property type="term" value="F:zinc ion binding"/>
    <property type="evidence" value="ECO:0007669"/>
    <property type="project" value="UniProtKB-KW"/>
</dbReference>
<dbReference type="GO" id="GO:0039648">
    <property type="term" value="P:symbiont-mediated perturbation of host ubiquitin-like protein modification"/>
    <property type="evidence" value="ECO:0007669"/>
    <property type="project" value="UniProtKB-KW"/>
</dbReference>
<dbReference type="GO" id="GO:0046776">
    <property type="term" value="P:symbiont-mediated suppression of host antigen processing and presentation of peptide antigen via MHC class I"/>
    <property type="evidence" value="ECO:0007669"/>
    <property type="project" value="UniProtKB-KW"/>
</dbReference>
<dbReference type="Gene3D" id="3.30.40.10">
    <property type="entry name" value="Zinc/RING finger domain, C3HC4 (zinc finger)"/>
    <property type="match status" value="1"/>
</dbReference>
<dbReference type="InterPro" id="IPR011016">
    <property type="entry name" value="Znf_RING-CH"/>
</dbReference>
<dbReference type="InterPro" id="IPR013083">
    <property type="entry name" value="Znf_RING/FYVE/PHD"/>
</dbReference>
<dbReference type="PANTHER" id="PTHR46065">
    <property type="entry name" value="E3 UBIQUITIN-PROTEIN LIGASE MARCH 2/3 FAMILY MEMBER"/>
    <property type="match status" value="1"/>
</dbReference>
<dbReference type="PANTHER" id="PTHR46065:SF3">
    <property type="entry name" value="FI20425P1"/>
    <property type="match status" value="1"/>
</dbReference>
<dbReference type="Pfam" id="PF12906">
    <property type="entry name" value="RINGv"/>
    <property type="match status" value="1"/>
</dbReference>
<dbReference type="SMART" id="SM00744">
    <property type="entry name" value="RINGv"/>
    <property type="match status" value="1"/>
</dbReference>
<dbReference type="SUPFAM" id="SSF57850">
    <property type="entry name" value="RING/U-box"/>
    <property type="match status" value="1"/>
</dbReference>
<dbReference type="PROSITE" id="PS51292">
    <property type="entry name" value="ZF_RING_CH"/>
    <property type="match status" value="1"/>
</dbReference>
<organismHost>
    <name type="scientific">Oryctolagus cuniculus</name>
    <name type="common">Rabbit</name>
    <dbReference type="NCBI Taxonomy" id="9986"/>
</organismHost>
<sequence>MSTIVDMVDVSLVDKCCWICKESCDVVRNYCKCRGDNKIVHKECLEEWINTDTVKNKSCAICETPYNVKQQYKKLTKWRCYRRDCHDSLLVNLPLCLIVGGISTYTLVSVEIIKLMESEETSELTKVFLVTSFLGPFIVTVLSALRTCIDCRTYFLTTRKRNTIHTLQELEDDDDDDDDDDDDDDEEYADAVEEIIIGPSN</sequence>
<keyword id="KW-1039">Host endosome</keyword>
<keyword id="KW-1040">Host Golgi apparatus</keyword>
<keyword id="KW-1043">Host membrane</keyword>
<keyword id="KW-0945">Host-virus interaction</keyword>
<keyword id="KW-1080">Inhibition of host adaptive immune response by virus</keyword>
<keyword id="KW-1115">Inhibition of host MHC class I molecule presentation by virus</keyword>
<keyword id="KW-0472">Membrane</keyword>
<keyword id="KW-0479">Metal-binding</keyword>
<keyword id="KW-1128">Modulation of host ubiquitin pathway by viral E3 ligase</keyword>
<keyword id="KW-1130">Modulation of host ubiquitin pathway by virus</keyword>
<keyword id="KW-1185">Reference proteome</keyword>
<keyword id="KW-0808">Transferase</keyword>
<keyword id="KW-0812">Transmembrane</keyword>
<keyword id="KW-1133">Transmembrane helix</keyword>
<keyword id="KW-0833">Ubl conjugation pathway</keyword>
<keyword id="KW-0899">Viral immunoevasion</keyword>
<keyword id="KW-0862">Zinc</keyword>
<keyword id="KW-0863">Zinc-finger</keyword>
<comment type="function">
    <text evidence="1">E3 ubiquitin-protein ligase which promotes ubiquitination and subsequent degradation of host MHC-I and CD4 molecules, presumably to prevent lysis of infected cells by cytotoxic T-lymphocytes and NK cell. Binds target molecules through transmembrane interaction. The result of this ubiquitination is the enhancement of the endocytosis of the target chain and the delivery to the lysosome, where it is proteolytically destroyed.</text>
</comment>
<comment type="catalytic activity">
    <reaction>
        <text>S-ubiquitinyl-[E2 ubiquitin-conjugating enzyme]-L-cysteine + [acceptor protein]-L-lysine = [E2 ubiquitin-conjugating enzyme]-L-cysteine + N(6)-ubiquitinyl-[acceptor protein]-L-lysine.</text>
        <dbReference type="EC" id="2.3.2.27"/>
    </reaction>
</comment>
<comment type="subcellular location">
    <subcellularLocation>
        <location evidence="5">Host membrane</location>
        <topology evidence="5">Multi-pass membrane protein</topology>
    </subcellularLocation>
    <subcellularLocation>
        <location>Host Golgi apparatus</location>
        <location>Host trans-Golgi network membrane</location>
    </subcellularLocation>
    <subcellularLocation>
        <location evidence="1">Host early endosome membrane</location>
    </subcellularLocation>
</comment>
<comment type="domain">
    <text evidence="3">The RING-CH-type zinc finger domain is required for E3 ligase activity.</text>
</comment>
<comment type="similarity">
    <text evidence="5">Belongs to the poxviridae LAP protein family.</text>
</comment>
<feature type="chain" id="PRO_0000396002" description="E3 ubiquitin-protein ligase LAP">
    <location>
        <begin position="1"/>
        <end position="201"/>
    </location>
</feature>
<feature type="topological domain" description="Cytoplasmic" evidence="2">
    <location>
        <begin position="1"/>
        <end position="92"/>
    </location>
</feature>
<feature type="transmembrane region" description="Helical" evidence="2">
    <location>
        <begin position="93"/>
        <end position="113"/>
    </location>
</feature>
<feature type="topological domain" description="Lumenal" evidence="2">
    <location>
        <begin position="114"/>
        <end position="123"/>
    </location>
</feature>
<feature type="transmembrane region" description="Helical" evidence="2">
    <location>
        <begin position="124"/>
        <end position="144"/>
    </location>
</feature>
<feature type="topological domain" description="Cytoplasmic" evidence="2">
    <location>
        <begin position="145"/>
        <end position="201"/>
    </location>
</feature>
<feature type="zinc finger region" description="RING-CH-type" evidence="3">
    <location>
        <begin position="9"/>
        <end position="69"/>
    </location>
</feature>
<feature type="region of interest" description="Disordered" evidence="4">
    <location>
        <begin position="168"/>
        <end position="188"/>
    </location>
</feature>
<feature type="compositionally biased region" description="Acidic residues" evidence="4">
    <location>
        <begin position="169"/>
        <end position="188"/>
    </location>
</feature>
<feature type="binding site" evidence="3">
    <location>
        <position position="17"/>
    </location>
    <ligand>
        <name>Zn(2+)</name>
        <dbReference type="ChEBI" id="CHEBI:29105"/>
        <label>1</label>
    </ligand>
</feature>
<feature type="binding site" evidence="3">
    <location>
        <position position="20"/>
    </location>
    <ligand>
        <name>Zn(2+)</name>
        <dbReference type="ChEBI" id="CHEBI:29105"/>
        <label>1</label>
    </ligand>
</feature>
<feature type="binding site" evidence="3">
    <location>
        <position position="31"/>
    </location>
    <ligand>
        <name>Zn(2+)</name>
        <dbReference type="ChEBI" id="CHEBI:29105"/>
        <label>2</label>
    </ligand>
</feature>
<feature type="binding site" evidence="3">
    <location>
        <position position="33"/>
    </location>
    <ligand>
        <name>Zn(2+)</name>
        <dbReference type="ChEBI" id="CHEBI:29105"/>
        <label>2</label>
    </ligand>
</feature>
<feature type="binding site" evidence="3">
    <location>
        <position position="41"/>
    </location>
    <ligand>
        <name>Zn(2+)</name>
        <dbReference type="ChEBI" id="CHEBI:29105"/>
        <label>1</label>
    </ligand>
</feature>
<feature type="binding site" evidence="3">
    <location>
        <position position="44"/>
    </location>
    <ligand>
        <name>Zn(2+)</name>
        <dbReference type="ChEBI" id="CHEBI:29105"/>
        <label>1</label>
    </ligand>
</feature>
<feature type="binding site" evidence="3">
    <location>
        <position position="59"/>
    </location>
    <ligand>
        <name>Zn(2+)</name>
        <dbReference type="ChEBI" id="CHEBI:29105"/>
        <label>2</label>
    </ligand>
</feature>
<feature type="binding site" evidence="3">
    <location>
        <position position="62"/>
    </location>
    <ligand>
        <name>Zn(2+)</name>
        <dbReference type="ChEBI" id="CHEBI:29105"/>
        <label>2</label>
    </ligand>
</feature>
<proteinExistence type="inferred from homology"/>
<reference key="1">
    <citation type="journal article" date="1999" name="Virology">
        <title>The complete genome sequence of shope (Rabbit) fibroma virus.</title>
        <authorList>
            <person name="Willer D.O."/>
            <person name="McFadden G."/>
            <person name="Evans D.H."/>
        </authorList>
    </citation>
    <scope>NUCLEOTIDE SEQUENCE [LARGE SCALE GENOMIC DNA]</scope>
</reference>
<name>LAP_RFVKA</name>
<gene>
    <name type="ordered locus">s153R</name>
</gene>
<organism>
    <name type="scientific">Rabbit fibroma virus (strain Kasza)</name>
    <name type="common">RFV</name>
    <name type="synonym">Shope fibroma virus (strain Kasza)</name>
    <dbReference type="NCBI Taxonomy" id="10272"/>
    <lineage>
        <taxon>Viruses</taxon>
        <taxon>Varidnaviria</taxon>
        <taxon>Bamfordvirae</taxon>
        <taxon>Nucleocytoviricota</taxon>
        <taxon>Pokkesviricetes</taxon>
        <taxon>Chitovirales</taxon>
        <taxon>Poxviridae</taxon>
        <taxon>Chordopoxvirinae</taxon>
        <taxon>Leporipoxvirus</taxon>
        <taxon>Rabbit fibroma virus</taxon>
    </lineage>
</organism>
<accession>Q9Q8T2</accession>
<evidence type="ECO:0000250" key="1"/>
<evidence type="ECO:0000255" key="2"/>
<evidence type="ECO:0000255" key="3">
    <source>
        <dbReference type="PROSITE-ProRule" id="PRU00623"/>
    </source>
</evidence>
<evidence type="ECO:0000256" key="4">
    <source>
        <dbReference type="SAM" id="MobiDB-lite"/>
    </source>
</evidence>
<evidence type="ECO:0000305" key="5"/>
<protein>
    <recommendedName>
        <fullName>E3 ubiquitin-protein ligase LAP</fullName>
        <ecNumber>2.3.2.27</ecNumber>
    </recommendedName>
    <alternativeName>
        <fullName>Leukemia associated protein</fullName>
        <shortName>LAP</shortName>
    </alternativeName>
    <alternativeName>
        <fullName evidence="5">RING-type E3 ubiquitin transferase LAP</fullName>
    </alternativeName>
</protein>